<keyword id="KW-0025">Alternative splicing</keyword>
<keyword id="KW-1015">Disulfide bond</keyword>
<keyword id="KW-0325">Glycoprotein</keyword>
<keyword id="KW-0326">Glycosidase</keyword>
<keyword id="KW-0378">Hydrolase</keyword>
<keyword id="KW-0472">Membrane</keyword>
<keyword id="KW-1267">Proteomics identification</keyword>
<keyword id="KW-1185">Reference proteome</keyword>
<keyword id="KW-0677">Repeat</keyword>
<keyword id="KW-0735">Signal-anchor</keyword>
<keyword id="KW-0765">Sulfation</keyword>
<keyword id="KW-0812">Transmembrane</keyword>
<keyword id="KW-1133">Transmembrane helix</keyword>
<comment type="catalytic activity">
    <reaction>
        <text>Hydrolysis of terminal (1-&gt;4)-linked alpha-D-glucose residues successively from non-reducing ends of the chains with release of beta-D-glucose.</text>
        <dbReference type="EC" id="3.2.1.3"/>
    </reaction>
</comment>
<comment type="subcellular location">
    <subcellularLocation>
        <location evidence="7">Membrane</location>
        <topology evidence="7">Single-pass membrane protein</topology>
    </subcellularLocation>
</comment>
<comment type="alternative products">
    <event type="alternative splicing"/>
    <isoform>
        <id>Q2M2H8-1</id>
        <name>1</name>
        <sequence type="displayed"/>
    </isoform>
    <isoform>
        <id>Q2M2H8-3</id>
        <name>2</name>
        <sequence type="described" ref="VSP_055415 VSP_055416"/>
    </isoform>
</comment>
<comment type="similarity">
    <text evidence="7">Belongs to the glycosyl hydrolase 31 family.</text>
</comment>
<comment type="caution">
    <text evidence="7">Although it belongs to the glycosyl hydrolase 31 family, it lacks one active site residue, thus suggesting it may lack some enzyme activity.</text>
</comment>
<gene>
    <name evidence="8" type="primary">MGAM2</name>
</gene>
<organism>
    <name type="scientific">Homo sapiens</name>
    <name type="common">Human</name>
    <dbReference type="NCBI Taxonomy" id="9606"/>
    <lineage>
        <taxon>Eukaryota</taxon>
        <taxon>Metazoa</taxon>
        <taxon>Chordata</taxon>
        <taxon>Craniata</taxon>
        <taxon>Vertebrata</taxon>
        <taxon>Euteleostomi</taxon>
        <taxon>Mammalia</taxon>
        <taxon>Eutheria</taxon>
        <taxon>Euarchontoglires</taxon>
        <taxon>Primates</taxon>
        <taxon>Haplorrhini</taxon>
        <taxon>Catarrhini</taxon>
        <taxon>Hominidae</taxon>
        <taxon>Homo</taxon>
    </lineage>
</organism>
<dbReference type="EC" id="3.2.1.3"/>
<dbReference type="EMBL" id="AC091742">
    <property type="status" value="NOT_ANNOTATED_CDS"/>
    <property type="molecule type" value="Genomic_DNA"/>
</dbReference>
<dbReference type="EMBL" id="CH236959">
    <property type="protein sequence ID" value="EAL23771.1"/>
    <property type="molecule type" value="Genomic_DNA"/>
</dbReference>
<dbReference type="EMBL" id="CH471198">
    <property type="protein sequence ID" value="EAW51984.1"/>
    <property type="molecule type" value="Genomic_DNA"/>
</dbReference>
<dbReference type="EMBL" id="BC111973">
    <property type="status" value="NOT_ANNOTATED_CDS"/>
    <property type="molecule type" value="mRNA"/>
</dbReference>
<dbReference type="EMBL" id="BC111975">
    <property type="status" value="NOT_ANNOTATED_CDS"/>
    <property type="molecule type" value="mRNA"/>
</dbReference>
<dbReference type="CCDS" id="CCDS78281.1">
    <molecule id="Q2M2H8-1"/>
</dbReference>
<dbReference type="RefSeq" id="NP_001280555.1">
    <molecule id="Q2M2H8-1"/>
    <property type="nucleotide sequence ID" value="NM_001293626.2"/>
</dbReference>
<dbReference type="SMR" id="Q2M2H8"/>
<dbReference type="BioGRID" id="125025">
    <property type="interactions" value="3"/>
</dbReference>
<dbReference type="FunCoup" id="Q2M2H8">
    <property type="interactions" value="82"/>
</dbReference>
<dbReference type="IntAct" id="Q2M2H8">
    <property type="interactions" value="1"/>
</dbReference>
<dbReference type="STRING" id="9606.ENSP00000420449"/>
<dbReference type="BindingDB" id="Q2M2H8"/>
<dbReference type="ChEMBL" id="CHEMBL3833502"/>
<dbReference type="CAZy" id="GH31">
    <property type="family name" value="Glycoside Hydrolase Family 31"/>
</dbReference>
<dbReference type="GlyCosmos" id="Q2M2H8">
    <property type="glycosylation" value="4 sites, No reported glycans"/>
</dbReference>
<dbReference type="GlyGen" id="Q2M2H8">
    <property type="glycosylation" value="11 sites, 1 O-linked glycan (1 site)"/>
</dbReference>
<dbReference type="iPTMnet" id="Q2M2H8"/>
<dbReference type="PhosphoSitePlus" id="Q2M2H8"/>
<dbReference type="BioMuta" id="MGAM2"/>
<dbReference type="DMDM" id="190359876"/>
<dbReference type="jPOST" id="Q2M2H8"/>
<dbReference type="MassIVE" id="Q2M2H8"/>
<dbReference type="PaxDb" id="9606-ENSP00000447431"/>
<dbReference type="PeptideAtlas" id="Q2M2H8"/>
<dbReference type="Pumba" id="Q2M2H8"/>
<dbReference type="Antibodypedia" id="70894">
    <property type="antibodies" value="4 antibodies from 4 providers"/>
</dbReference>
<dbReference type="DNASU" id="93432"/>
<dbReference type="Ensembl" id="ENST00000477922.4">
    <molecule id="Q2M2H8-1"/>
    <property type="protein sequence ID" value="ENSP00000420449.3"/>
    <property type="gene ID" value="ENSG00000257743.9"/>
</dbReference>
<dbReference type="Ensembl" id="ENST00000550469.6">
    <molecule id="Q2M2H8-3"/>
    <property type="protein sequence ID" value="ENSP00000447431.2"/>
    <property type="gene ID" value="ENSG00000257743.9"/>
</dbReference>
<dbReference type="Ensembl" id="ENST00000622623.2">
    <molecule id="Q2M2H8-3"/>
    <property type="protein sequence ID" value="ENSP00000484330.1"/>
    <property type="gene ID" value="ENSG00000278563.2"/>
</dbReference>
<dbReference type="Ensembl" id="ENST00000632823.1">
    <molecule id="Q2M2H8-1"/>
    <property type="protein sequence ID" value="ENSP00000488423.1"/>
    <property type="gene ID" value="ENSG00000278563.2"/>
</dbReference>
<dbReference type="GeneID" id="93432"/>
<dbReference type="KEGG" id="hsa:93432"/>
<dbReference type="MANE-Select" id="ENST00000477922.4">
    <property type="protein sequence ID" value="ENSP00000420449.3"/>
    <property type="RefSeq nucleotide sequence ID" value="NM_001293626.2"/>
    <property type="RefSeq protein sequence ID" value="NP_001280555.1"/>
</dbReference>
<dbReference type="UCSC" id="uc064isf.1">
    <molecule id="Q2M2H8-1"/>
    <property type="organism name" value="human"/>
</dbReference>
<dbReference type="AGR" id="HGNC:28101"/>
<dbReference type="CTD" id="93432"/>
<dbReference type="DisGeNET" id="93432"/>
<dbReference type="GeneCards" id="MGAM2"/>
<dbReference type="HGNC" id="HGNC:28101">
    <property type="gene designation" value="MGAM2"/>
</dbReference>
<dbReference type="HPA" id="ENSG00000257743">
    <property type="expression patterns" value="Tissue enhanced (intestine, pancreas, salivary gland)"/>
</dbReference>
<dbReference type="neXtProt" id="NX_Q2M2H8"/>
<dbReference type="OpenTargets" id="ENSG00000257743"/>
<dbReference type="VEuPathDB" id="HostDB:ENSG00000257743"/>
<dbReference type="eggNOG" id="KOG1065">
    <property type="taxonomic scope" value="Eukaryota"/>
</dbReference>
<dbReference type="GeneTree" id="ENSGT00940000163091"/>
<dbReference type="HOGENOM" id="CLU_000631_3_0_1"/>
<dbReference type="InParanoid" id="Q2M2H8"/>
<dbReference type="OMA" id="NICGYTN"/>
<dbReference type="OrthoDB" id="5839090at2759"/>
<dbReference type="PAN-GO" id="Q2M2H8">
    <property type="GO annotations" value="1 GO annotation based on evolutionary models"/>
</dbReference>
<dbReference type="PhylomeDB" id="Q2M2H8"/>
<dbReference type="PathwayCommons" id="Q2M2H8"/>
<dbReference type="SignaLink" id="Q2M2H8"/>
<dbReference type="BioGRID-ORCS" id="93432">
    <property type="hits" value="1 hit in 123 CRISPR screens"/>
</dbReference>
<dbReference type="ChiTaRS" id="MGAM2">
    <property type="organism name" value="human"/>
</dbReference>
<dbReference type="GenomeRNAi" id="93432"/>
<dbReference type="Pharos" id="Q2M2H8">
    <property type="development level" value="Tdark"/>
</dbReference>
<dbReference type="PRO" id="PR:Q2M2H8"/>
<dbReference type="Proteomes" id="UP000005640">
    <property type="component" value="Chromosome 7"/>
</dbReference>
<dbReference type="RNAct" id="Q2M2H8">
    <property type="molecule type" value="protein"/>
</dbReference>
<dbReference type="Bgee" id="ENSG00000257743">
    <property type="expression patterns" value="Expressed in duodenum and 48 other cell types or tissues"/>
</dbReference>
<dbReference type="GO" id="GO:0016020">
    <property type="term" value="C:membrane"/>
    <property type="evidence" value="ECO:0007669"/>
    <property type="project" value="UniProtKB-SubCell"/>
</dbReference>
<dbReference type="GO" id="GO:0004558">
    <property type="term" value="F:alpha-1,4-glucosidase activity"/>
    <property type="evidence" value="ECO:0000318"/>
    <property type="project" value="GO_Central"/>
</dbReference>
<dbReference type="GO" id="GO:0030246">
    <property type="term" value="F:carbohydrate binding"/>
    <property type="evidence" value="ECO:0007669"/>
    <property type="project" value="InterPro"/>
</dbReference>
<dbReference type="GO" id="GO:0004339">
    <property type="term" value="F:glucan 1,4-alpha-glucosidase activity"/>
    <property type="evidence" value="ECO:0007669"/>
    <property type="project" value="UniProtKB-EC"/>
</dbReference>
<dbReference type="GO" id="GO:0005975">
    <property type="term" value="P:carbohydrate metabolic process"/>
    <property type="evidence" value="ECO:0007669"/>
    <property type="project" value="InterPro"/>
</dbReference>
<dbReference type="CDD" id="cd06602">
    <property type="entry name" value="GH31_MGAM_SI_GAA"/>
    <property type="match status" value="2"/>
</dbReference>
<dbReference type="CDD" id="cd14752">
    <property type="entry name" value="GH31_N"/>
    <property type="match status" value="2"/>
</dbReference>
<dbReference type="CDD" id="cd00111">
    <property type="entry name" value="Trefoil"/>
    <property type="match status" value="2"/>
</dbReference>
<dbReference type="FunFam" id="2.60.40.1180:FF:000001">
    <property type="entry name" value="Maltase-glucoamylase, intestinal"/>
    <property type="match status" value="2"/>
</dbReference>
<dbReference type="FunFam" id="2.60.40.1180:FF:000005">
    <property type="entry name" value="Maltase-glucoamylase, intestinal"/>
    <property type="match status" value="2"/>
</dbReference>
<dbReference type="FunFam" id="2.60.40.1760:FF:000001">
    <property type="entry name" value="Maltase-glucoamylase, intestinal"/>
    <property type="match status" value="2"/>
</dbReference>
<dbReference type="FunFam" id="3.20.20.80:FF:000016">
    <property type="entry name" value="Maltase-glucoamylase, intestinal"/>
    <property type="match status" value="2"/>
</dbReference>
<dbReference type="Gene3D" id="3.20.20.80">
    <property type="entry name" value="Glycosidases"/>
    <property type="match status" value="2"/>
</dbReference>
<dbReference type="Gene3D" id="2.60.40.1760">
    <property type="entry name" value="glycosyl hydrolase (family 31)"/>
    <property type="match status" value="2"/>
</dbReference>
<dbReference type="Gene3D" id="2.60.40.1180">
    <property type="entry name" value="Golgi alpha-mannosidase II"/>
    <property type="match status" value="4"/>
</dbReference>
<dbReference type="Gene3D" id="4.10.110.10">
    <property type="entry name" value="Spasmolytic Protein, domain 1"/>
    <property type="match status" value="2"/>
</dbReference>
<dbReference type="InterPro" id="IPR011013">
    <property type="entry name" value="Gal_mutarotase_sf_dom"/>
</dbReference>
<dbReference type="InterPro" id="IPR030458">
    <property type="entry name" value="Glyco_hydro_31_AS"/>
</dbReference>
<dbReference type="InterPro" id="IPR048395">
    <property type="entry name" value="Glyco_hydro_31_C"/>
</dbReference>
<dbReference type="InterPro" id="IPR025887">
    <property type="entry name" value="Glyco_hydro_31_N_dom"/>
</dbReference>
<dbReference type="InterPro" id="IPR000322">
    <property type="entry name" value="Glyco_hydro_31_TIM"/>
</dbReference>
<dbReference type="InterPro" id="IPR013780">
    <property type="entry name" value="Glyco_hydro_b"/>
</dbReference>
<dbReference type="InterPro" id="IPR017853">
    <property type="entry name" value="Glycoside_hydrolase_SF"/>
</dbReference>
<dbReference type="InterPro" id="IPR000519">
    <property type="entry name" value="P_trefoil_dom"/>
</dbReference>
<dbReference type="InterPro" id="IPR044913">
    <property type="entry name" value="P_trefoil_dom_sf"/>
</dbReference>
<dbReference type="PANTHER" id="PTHR22762">
    <property type="entry name" value="ALPHA-GLUCOSIDASE"/>
    <property type="match status" value="1"/>
</dbReference>
<dbReference type="PANTHER" id="PTHR22762:SF133">
    <property type="entry name" value="P-TYPE DOMAIN-CONTAINING PROTEIN"/>
    <property type="match status" value="1"/>
</dbReference>
<dbReference type="Pfam" id="PF13802">
    <property type="entry name" value="Gal_mutarotas_2"/>
    <property type="match status" value="2"/>
</dbReference>
<dbReference type="Pfam" id="PF01055">
    <property type="entry name" value="Glyco_hydro_31_2nd"/>
    <property type="match status" value="2"/>
</dbReference>
<dbReference type="Pfam" id="PF21365">
    <property type="entry name" value="Glyco_hydro_31_3rd"/>
    <property type="match status" value="2"/>
</dbReference>
<dbReference type="Pfam" id="PF00088">
    <property type="entry name" value="Trefoil"/>
    <property type="match status" value="2"/>
</dbReference>
<dbReference type="SMART" id="SM00018">
    <property type="entry name" value="PD"/>
    <property type="match status" value="2"/>
</dbReference>
<dbReference type="SUPFAM" id="SSF51445">
    <property type="entry name" value="(Trans)glycosidases"/>
    <property type="match status" value="2"/>
</dbReference>
<dbReference type="SUPFAM" id="SSF74650">
    <property type="entry name" value="Galactose mutarotase-like"/>
    <property type="match status" value="2"/>
</dbReference>
<dbReference type="SUPFAM" id="SSF51011">
    <property type="entry name" value="Glycosyl hydrolase domain"/>
    <property type="match status" value="2"/>
</dbReference>
<dbReference type="SUPFAM" id="SSF57492">
    <property type="entry name" value="Trefoil"/>
    <property type="match status" value="2"/>
</dbReference>
<dbReference type="PROSITE" id="PS00129">
    <property type="entry name" value="GLYCOSYL_HYDROL_F31_1"/>
    <property type="match status" value="1"/>
</dbReference>
<dbReference type="PROSITE" id="PS00092">
    <property type="entry name" value="N6_MTASE"/>
    <property type="match status" value="1"/>
</dbReference>
<dbReference type="PROSITE" id="PS51448">
    <property type="entry name" value="P_TREFOIL_2"/>
    <property type="match status" value="2"/>
</dbReference>
<proteinExistence type="evidence at protein level"/>
<protein>
    <recommendedName>
        <fullName evidence="7">Probable maltase-glucoamylase 2</fullName>
    </recommendedName>
    <alternativeName>
        <fullName>Maltase-glucoamylase (alpha-glucosidase) pseudogene</fullName>
    </alternativeName>
    <domain>
        <recommendedName>
            <fullName>Glucoamylase</fullName>
            <ecNumber>3.2.1.3</ecNumber>
        </recommendedName>
        <alternativeName>
            <fullName>Glucan 1,4-alpha-glucosidase</fullName>
        </alternativeName>
    </domain>
</protein>
<feature type="chain" id="PRO_0000341380" description="Probable maltase-glucoamylase 2">
    <location>
        <begin position="1"/>
        <end position="2515"/>
    </location>
</feature>
<feature type="topological domain" description="Cytoplasmic" evidence="2">
    <location>
        <begin position="1"/>
        <end position="9"/>
    </location>
</feature>
<feature type="transmembrane region" description="Helical" evidence="2">
    <location>
        <begin position="10"/>
        <end position="30"/>
    </location>
</feature>
<feature type="topological domain" description="Lumenal" evidence="2">
    <location>
        <begin position="31"/>
        <end position="482"/>
    </location>
</feature>
<feature type="domain" description="P-type 1" evidence="3">
    <location>
        <begin position="41"/>
        <end position="88"/>
    </location>
</feature>
<feature type="domain" description="P-type 2" evidence="3">
    <location>
        <begin position="904"/>
        <end position="950"/>
    </location>
</feature>
<feature type="region of interest" description="Maltase" evidence="1">
    <location>
        <begin position="152"/>
        <end position="865"/>
    </location>
</feature>
<feature type="region of interest" description="Glucoamylase" evidence="1">
    <location>
        <begin position="1023"/>
        <end position="1766"/>
    </location>
</feature>
<feature type="region of interest" description="Disordered" evidence="5">
    <location>
        <begin position="1816"/>
        <end position="1901"/>
    </location>
</feature>
<feature type="region of interest" description="Disordered" evidence="5">
    <location>
        <begin position="1994"/>
        <end position="2015"/>
    </location>
</feature>
<feature type="region of interest" description="Disordered" evidence="5">
    <location>
        <begin position="2037"/>
        <end position="2091"/>
    </location>
</feature>
<feature type="compositionally biased region" description="Polar residues" evidence="5">
    <location>
        <begin position="1817"/>
        <end position="1831"/>
    </location>
</feature>
<feature type="compositionally biased region" description="Low complexity" evidence="5">
    <location>
        <begin position="1832"/>
        <end position="1901"/>
    </location>
</feature>
<feature type="active site" description="Nucleophile" evidence="4">
    <location>
        <position position="478"/>
    </location>
</feature>
<feature type="active site" evidence="1">
    <location>
        <position position="481"/>
    </location>
</feature>
<feature type="active site" description="Nucleophile" evidence="4">
    <location>
        <position position="1375"/>
    </location>
</feature>
<feature type="active site" evidence="1">
    <location>
        <position position="1378"/>
    </location>
</feature>
<feature type="modified residue" description="Sulfotyrosine" evidence="2">
    <location>
        <position position="371"/>
    </location>
</feature>
<feature type="modified residue" description="Sulfotyrosine" evidence="2">
    <location>
        <position position="1238"/>
    </location>
</feature>
<feature type="glycosylation site" description="N-linked (GlcNAc...) asparagine" evidence="2">
    <location>
        <position position="167"/>
    </location>
</feature>
<feature type="glycosylation site" description="N-linked (GlcNAc...) asparagine" evidence="2">
    <location>
        <position position="421"/>
    </location>
</feature>
<feature type="glycosylation site" description="N-linked (GlcNAc...) asparagine" evidence="2">
    <location>
        <position position="613"/>
    </location>
</feature>
<feature type="glycosylation site" description="N-linked (GlcNAc...) asparagine" evidence="2">
    <location>
        <position position="2249"/>
    </location>
</feature>
<feature type="disulfide bond" evidence="3">
    <location>
        <begin position="43"/>
        <end position="72"/>
    </location>
</feature>
<feature type="disulfide bond" evidence="3">
    <location>
        <begin position="54"/>
        <end position="71"/>
    </location>
</feature>
<feature type="disulfide bond" evidence="3">
    <location>
        <begin position="65"/>
        <end position="84"/>
    </location>
</feature>
<feature type="disulfide bond" evidence="3">
    <location>
        <begin position="608"/>
        <end position="619"/>
    </location>
</feature>
<feature type="disulfide bond" evidence="3">
    <location>
        <begin position="916"/>
        <end position="933"/>
    </location>
</feature>
<feature type="disulfide bond" evidence="3">
    <location>
        <begin position="928"/>
        <end position="946"/>
    </location>
</feature>
<feature type="splice variant" id="VSP_055415" description="In isoform 2." evidence="6">
    <original>EMNEV</original>
    <variation>VSYYS</variation>
    <location>
        <begin position="478"/>
        <end position="482"/>
    </location>
</feature>
<feature type="splice variant" id="VSP_055416" description="In isoform 2." evidence="6">
    <location>
        <begin position="483"/>
        <end position="2515"/>
    </location>
</feature>
<feature type="sequence conflict" description="In Ref. 4; BC111973/BC111975." evidence="7" ref="4">
    <original>F</original>
    <variation>L</variation>
    <location>
        <position position="327"/>
    </location>
</feature>
<reference key="1">
    <citation type="journal article" date="2003" name="Nature">
        <title>The DNA sequence of human chromosome 7.</title>
        <authorList>
            <person name="Hillier L.W."/>
            <person name="Fulton R.S."/>
            <person name="Fulton L.A."/>
            <person name="Graves T.A."/>
            <person name="Pepin K.H."/>
            <person name="Wagner-McPherson C."/>
            <person name="Layman D."/>
            <person name="Maas J."/>
            <person name="Jaeger S."/>
            <person name="Walker R."/>
            <person name="Wylie K."/>
            <person name="Sekhon M."/>
            <person name="Becker M.C."/>
            <person name="O'Laughlin M.D."/>
            <person name="Schaller M.E."/>
            <person name="Fewell G.A."/>
            <person name="Delehaunty K.D."/>
            <person name="Miner T.L."/>
            <person name="Nash W.E."/>
            <person name="Cordes M."/>
            <person name="Du H."/>
            <person name="Sun H."/>
            <person name="Edwards J."/>
            <person name="Bradshaw-Cordum H."/>
            <person name="Ali J."/>
            <person name="Andrews S."/>
            <person name="Isak A."/>
            <person name="Vanbrunt A."/>
            <person name="Nguyen C."/>
            <person name="Du F."/>
            <person name="Lamar B."/>
            <person name="Courtney L."/>
            <person name="Kalicki J."/>
            <person name="Ozersky P."/>
            <person name="Bielicki L."/>
            <person name="Scott K."/>
            <person name="Holmes A."/>
            <person name="Harkins R."/>
            <person name="Harris A."/>
            <person name="Strong C.M."/>
            <person name="Hou S."/>
            <person name="Tomlinson C."/>
            <person name="Dauphin-Kohlberg S."/>
            <person name="Kozlowicz-Reilly A."/>
            <person name="Leonard S."/>
            <person name="Rohlfing T."/>
            <person name="Rock S.M."/>
            <person name="Tin-Wollam A.-M."/>
            <person name="Abbott A."/>
            <person name="Minx P."/>
            <person name="Maupin R."/>
            <person name="Strowmatt C."/>
            <person name="Latreille P."/>
            <person name="Miller N."/>
            <person name="Johnson D."/>
            <person name="Murray J."/>
            <person name="Woessner J.P."/>
            <person name="Wendl M.C."/>
            <person name="Yang S.-P."/>
            <person name="Schultz B.R."/>
            <person name="Wallis J.W."/>
            <person name="Spieth J."/>
            <person name="Bieri T.A."/>
            <person name="Nelson J.O."/>
            <person name="Berkowicz N."/>
            <person name="Wohldmann P.E."/>
            <person name="Cook L.L."/>
            <person name="Hickenbotham M.T."/>
            <person name="Eldred J."/>
            <person name="Williams D."/>
            <person name="Bedell J.A."/>
            <person name="Mardis E.R."/>
            <person name="Clifton S.W."/>
            <person name="Chissoe S.L."/>
            <person name="Marra M.A."/>
            <person name="Raymond C."/>
            <person name="Haugen E."/>
            <person name="Gillett W."/>
            <person name="Zhou Y."/>
            <person name="James R."/>
            <person name="Phelps K."/>
            <person name="Iadanoto S."/>
            <person name="Bubb K."/>
            <person name="Simms E."/>
            <person name="Levy R."/>
            <person name="Clendenning J."/>
            <person name="Kaul R."/>
            <person name="Kent W.J."/>
            <person name="Furey T.S."/>
            <person name="Baertsch R.A."/>
            <person name="Brent M.R."/>
            <person name="Keibler E."/>
            <person name="Flicek P."/>
            <person name="Bork P."/>
            <person name="Suyama M."/>
            <person name="Bailey J.A."/>
            <person name="Portnoy M.E."/>
            <person name="Torrents D."/>
            <person name="Chinwalla A.T."/>
            <person name="Gish W.R."/>
            <person name="Eddy S.R."/>
            <person name="McPherson J.D."/>
            <person name="Olson M.V."/>
            <person name="Eichler E.E."/>
            <person name="Green E.D."/>
            <person name="Waterston R.H."/>
            <person name="Wilson R.K."/>
        </authorList>
    </citation>
    <scope>NUCLEOTIDE SEQUENCE [LARGE SCALE GENOMIC DNA]</scope>
</reference>
<reference key="2">
    <citation type="journal article" date="2003" name="Science">
        <title>Human chromosome 7: DNA sequence and biology.</title>
        <authorList>
            <person name="Scherer S.W."/>
            <person name="Cheung J."/>
            <person name="MacDonald J.R."/>
            <person name="Osborne L.R."/>
            <person name="Nakabayashi K."/>
            <person name="Herbrick J.-A."/>
            <person name="Carson A.R."/>
            <person name="Parker-Katiraee L."/>
            <person name="Skaug J."/>
            <person name="Khaja R."/>
            <person name="Zhang J."/>
            <person name="Hudek A.K."/>
            <person name="Li M."/>
            <person name="Haddad M."/>
            <person name="Duggan G.E."/>
            <person name="Fernandez B.A."/>
            <person name="Kanematsu E."/>
            <person name="Gentles S."/>
            <person name="Christopoulos C.C."/>
            <person name="Choufani S."/>
            <person name="Kwasnicka D."/>
            <person name="Zheng X.H."/>
            <person name="Lai Z."/>
            <person name="Nusskern D.R."/>
            <person name="Zhang Q."/>
            <person name="Gu Z."/>
            <person name="Lu F."/>
            <person name="Zeesman S."/>
            <person name="Nowaczyk M.J."/>
            <person name="Teshima I."/>
            <person name="Chitayat D."/>
            <person name="Shuman C."/>
            <person name="Weksberg R."/>
            <person name="Zackai E.H."/>
            <person name="Grebe T.A."/>
            <person name="Cox S.R."/>
            <person name="Kirkpatrick S.J."/>
            <person name="Rahman N."/>
            <person name="Friedman J.M."/>
            <person name="Heng H.H.Q."/>
            <person name="Pelicci P.G."/>
            <person name="Lo-Coco F."/>
            <person name="Belloni E."/>
            <person name="Shaffer L.G."/>
            <person name="Pober B."/>
            <person name="Morton C.C."/>
            <person name="Gusella J.F."/>
            <person name="Bruns G.A.P."/>
            <person name="Korf B.R."/>
            <person name="Quade B.J."/>
            <person name="Ligon A.H."/>
            <person name="Ferguson H."/>
            <person name="Higgins A.W."/>
            <person name="Leach N.T."/>
            <person name="Herrick S.R."/>
            <person name="Lemyre E."/>
            <person name="Farra C.G."/>
            <person name="Kim H.-G."/>
            <person name="Summers A.M."/>
            <person name="Gripp K.W."/>
            <person name="Roberts W."/>
            <person name="Szatmari P."/>
            <person name="Winsor E.J.T."/>
            <person name="Grzeschik K.-H."/>
            <person name="Teebi A."/>
            <person name="Minassian B.A."/>
            <person name="Kere J."/>
            <person name="Armengol L."/>
            <person name="Pujana M.A."/>
            <person name="Estivill X."/>
            <person name="Wilson M.D."/>
            <person name="Koop B.F."/>
            <person name="Tosi S."/>
            <person name="Moore G.E."/>
            <person name="Boright A.P."/>
            <person name="Zlotorynski E."/>
            <person name="Kerem B."/>
            <person name="Kroisel P.M."/>
            <person name="Petek E."/>
            <person name="Oscier D.G."/>
            <person name="Mould S.J."/>
            <person name="Doehner H."/>
            <person name="Doehner K."/>
            <person name="Rommens J.M."/>
            <person name="Vincent J.B."/>
            <person name="Venter J.C."/>
            <person name="Li P.W."/>
            <person name="Mural R.J."/>
            <person name="Adams M.D."/>
            <person name="Tsui L.-C."/>
        </authorList>
    </citation>
    <scope>NUCLEOTIDE SEQUENCE [LARGE SCALE GENOMIC DNA]</scope>
</reference>
<reference key="3">
    <citation type="submission" date="2005-09" db="EMBL/GenBank/DDBJ databases">
        <authorList>
            <person name="Mural R.J."/>
            <person name="Istrail S."/>
            <person name="Sutton G.G."/>
            <person name="Florea L."/>
            <person name="Halpern A.L."/>
            <person name="Mobarry C.M."/>
            <person name="Lippert R."/>
            <person name="Walenz B."/>
            <person name="Shatkay H."/>
            <person name="Dew I."/>
            <person name="Miller J.R."/>
            <person name="Flanigan M.J."/>
            <person name="Edwards N.J."/>
            <person name="Bolanos R."/>
            <person name="Fasulo D."/>
            <person name="Halldorsson B.V."/>
            <person name="Hannenhalli S."/>
            <person name="Turner R."/>
            <person name="Yooseph S."/>
            <person name="Lu F."/>
            <person name="Nusskern D.R."/>
            <person name="Shue B.C."/>
            <person name="Zheng X.H."/>
            <person name="Zhong F."/>
            <person name="Delcher A.L."/>
            <person name="Huson D.H."/>
            <person name="Kravitz S.A."/>
            <person name="Mouchard L."/>
            <person name="Reinert K."/>
            <person name="Remington K.A."/>
            <person name="Clark A.G."/>
            <person name="Waterman M.S."/>
            <person name="Eichler E.E."/>
            <person name="Adams M.D."/>
            <person name="Hunkapiller M.W."/>
            <person name="Myers E.W."/>
            <person name="Venter J.C."/>
        </authorList>
    </citation>
    <scope>NUCLEOTIDE SEQUENCE [LARGE SCALE GENOMIC DNA]</scope>
</reference>
<reference key="4">
    <citation type="journal article" date="2004" name="Genome Res.">
        <title>The status, quality, and expansion of the NIH full-length cDNA project: the Mammalian Gene Collection (MGC).</title>
        <authorList>
            <consortium name="The MGC Project Team"/>
        </authorList>
    </citation>
    <scope>NUCLEOTIDE SEQUENCE [LARGE SCALE MRNA] (ISOFORM 2)</scope>
</reference>
<name>MGAL_HUMAN</name>
<evidence type="ECO:0000250" key="1"/>
<evidence type="ECO:0000255" key="2"/>
<evidence type="ECO:0000255" key="3">
    <source>
        <dbReference type="PROSITE-ProRule" id="PRU00779"/>
    </source>
</evidence>
<evidence type="ECO:0000255" key="4">
    <source>
        <dbReference type="PROSITE-ProRule" id="PRU10066"/>
    </source>
</evidence>
<evidence type="ECO:0000256" key="5">
    <source>
        <dbReference type="SAM" id="MobiDB-lite"/>
    </source>
</evidence>
<evidence type="ECO:0000303" key="6">
    <source>
    </source>
</evidence>
<evidence type="ECO:0000305" key="7"/>
<evidence type="ECO:0000312" key="8">
    <source>
        <dbReference type="HGNC" id="HGNC:28101"/>
    </source>
</evidence>
<accession>Q2M2H8</accession>
<accession>A4D2I3</accession>
<accession>C9JNC2</accession>
<sequence length="2515" mass="277990">MARKLSVLEVLLIIFCLIVVTIDILLLLLVLEETSDTSFTPECPEIPQSERIDCTPDQEVTEDICRWQYKCCWSPVADANVPRCFFPWNWGYEASNGHTNTSTGFTAQLKRLPSPSLFGNDVATTLFTAEYQTSNRFHFKITDFNNIRYEVSHENINLVDGIADASNLSYYVEVTDKPFSIKIMRTSNRRVLLDTSIGPLQFAQQYLQLSFRLPSANVYGLGEHVHQQYRHNMTWKTWPIFTRDATPTEGMINLYGAHTFFLCLEDARGSSFGVFLMNSNAMEVTLQPAPAITYRTIGGILDFYVFLGNTPEQVVQEYLELVGRPFFPPYWSLGFQLSRRDYGGINKLKEVVSRNRLAEIPYDVQYSDIDYMDGKKDFTVDEVAYSGLPDFVKELHDNGQKYLIIMNPGISKNSNYEPYNNGSLKRVWILGSNGFAVGEGYPGPTVFPDYTNPVCTEWWTDQVAKFHDHLEFDGVWIEMNEVSSLLQASNNQCESNNLNFPPFLPRVLDHLLFARTLCMDTEFHGGLHYDIHSLYGHSMARTTNLALETIFMNNRSFILSRSTFAGSGKFAAHWLGDNAATWDDLRWSIPTILEFNLFGIPMVGANICGYNNNVTEELCRRWMQLGAFYPLPRNHNGPGFRDQDPAAFGVDSLLLKSSRHYLNIRYTLLPYLYTLFYHAHTRGETVARPLVHEFYQDSATWDVHEQFLWGPGLLITPVLYEGVDEVKAYIPDATWYDYETGVAISWRKQLVNMLLPGDKIGLHLRGGYIFPTQKPNTTTEASRRNSLGLIIALDYKREAKGELYWDDGVSKDAVTEKKYILYDFSVTSNHLQAKIINNNYMDTDNLMFTDITILGMDKQPANFIVLLNNVATSSPSVVYNASTKVVTITDLQGLVLGQEFSIRWNLPVSDLEKFNCYPDDPTASEESCRQRGCLWEDTSTPGVPTCYYDTIPNYVASDIQYLNTSITADLSLPMAPESAAAAASDSLSAKISFLHLKVIYHTATMLQVKIYDPTNKRYEVPVPLNTPPQPVGDPENRLYDVRIQNNPFGIQIQRKNSSTVIWDSQLPGFIFNDMFLSISTRLPSQYIYGFGETEHTTFRRNMNWNTWGMFAHDEPPAYKKNSYGVHPYYMALEEDGSAHGVLLLNSNAMDVTLQPTPALTYRTTGGILDFYIVLGPTPELVTQQYTELIGRPAMIPYWALGFHLSRYGYQNDAEISSLYDAMVAAQIPYDVQHVDIDYMNRKLDFTLSANFQNLSLLIEQMKKNGMRFILILDPAISGNETQYLPFIRGQENNVFIKWPDTNDIVWGKVWPDLPNVIVDGSLDHETQVKLYRAYVAFPDFFRNSTAAWWKKEIEELYANPREPEKSLKFDGLWIDMNEPSNFVDGSVRGCSNEMLNNPPYMPYLESRDKGLSSKTLCMESQQILPDSSPVEHYNVHNLYGWSQTRPTYEAVQEVTGQRGVIITRSTFPSSGRWGGHRLGNNTAAWDQLGKSIIGMMEFSLFGIPYTGADICGFFGDAEYEMCVRWMQLGAFYPFSRNHNNIGTRRQDPVAWNSTFEMLSRKVLETRYTLLPYLYTLMHKAHVEGSTVVRPLLHEFTDDRTTWDIDRQFMLGPAILISPVLETSTFEISAYFPRARWYDYSTGTSSTSTGQRKILKAPLDHINLHVRGGYILPWQEPAMNTHSSRQNFMGLIVALDDNGTAEGQVFWDDGQSIDTYENGNYFLANFIAAQNILQIQTIHNKYLSDSNPLKVGYIRIWGVNTYVTQVSFTYDNRQFMETNFKSEPYNQILTIQLTDKTINLEKLTEVTWIDGGPVLPTPTKTSTIPMSSHPSPSTTNATSSETITSSASANTTTGTTDTVPITTTSFPSTTSVTTNTTVPDTTSPFPTSTTNASTNATVPITTTPFPTSTIGVTTNATVPNTTAPFPTNASTASTNATVPITTTCFATSTIGVTTNATVPDTTAPFPTNTTTASTNATIPITTTPFATSTISVTTSTTVPDTTAPFPTSTTSASTNATPVPITTTLFATSTIGVTTGTTVPDTTAPFPTSTTSTSTSATVPITTTPSPTNTADANTSNTVPNTTMPSPTSSTTVSTIATVPISVTPSLTSTADATISTTVLIATTSSLTGTTDVSTSTTINNISTPVQTNTTNASTSTNVANITATSHTSTDDTVPNNTVPVTAIPSLANTGVDTTSNSFSIMTTSFSESTNAMNTTVIMATTSPTSTDVASTNNDASMTNFLLATMSAGNITSNSISITTTSFGNSVPFVTTPSPSTDATTTSNNTNPGMTTYYQTSPTIPTHTLTSIPSSITSILSMFPTSNTFTTDKITNFTTPTNANTIIFNTLDTKSTMVIDATVTTTSTKDNTMSPDTTVTSIDKFTTHITQFATPHSATTTTLALSHTSLAPTNLSNLGTMDITDADNSSSVTGNTTHISVSNLTTASVTITATGLDSQTPHMVINSVATYLPITATSATTDTTNITKYALNTTTPDSTVHTSATAPTYIANAINATQVP</sequence>